<organism>
    <name type="scientific">Pectobacterium atrosepticum (strain SCRI 1043 / ATCC BAA-672)</name>
    <name type="common">Erwinia carotovora subsp. atroseptica</name>
    <dbReference type="NCBI Taxonomy" id="218491"/>
    <lineage>
        <taxon>Bacteria</taxon>
        <taxon>Pseudomonadati</taxon>
        <taxon>Pseudomonadota</taxon>
        <taxon>Gammaproteobacteria</taxon>
        <taxon>Enterobacterales</taxon>
        <taxon>Pectobacteriaceae</taxon>
        <taxon>Pectobacterium</taxon>
    </lineage>
</organism>
<accession>Q6CZX7</accession>
<proteinExistence type="inferred from homology"/>
<keyword id="KW-1185">Reference proteome</keyword>
<keyword id="KW-0687">Ribonucleoprotein</keyword>
<keyword id="KW-0689">Ribosomal protein</keyword>
<keyword id="KW-0694">RNA-binding</keyword>
<keyword id="KW-0699">rRNA-binding</keyword>
<keyword id="KW-0820">tRNA-binding</keyword>
<evidence type="ECO:0000255" key="1">
    <source>
        <dbReference type="HAMAP-Rule" id="MF_01342"/>
    </source>
</evidence>
<evidence type="ECO:0000305" key="2"/>
<sequence length="136" mass="15321">MLQPKRTKFRKVHKGRNRGLAQGTDVSFGTFGLKAVGRGRLTARQIEAARRAMTRAVKRQGKIWIRVFPDKPITEKPLEVRMGKGKGNVEYWVALIQPGKVLYEMDGVPEELAREAFQLAAAKLPIKTTFVTKTVM</sequence>
<name>RL16_PECAS</name>
<dbReference type="EMBL" id="BX950851">
    <property type="protein sequence ID" value="CAG76921.1"/>
    <property type="molecule type" value="Genomic_DNA"/>
</dbReference>
<dbReference type="RefSeq" id="WP_005970273.1">
    <property type="nucleotide sequence ID" value="NC_004547.2"/>
</dbReference>
<dbReference type="SMR" id="Q6CZX7"/>
<dbReference type="STRING" id="218491.ECA4024"/>
<dbReference type="GeneID" id="93391973"/>
<dbReference type="KEGG" id="eca:ECA4024"/>
<dbReference type="eggNOG" id="COG0197">
    <property type="taxonomic scope" value="Bacteria"/>
</dbReference>
<dbReference type="HOGENOM" id="CLU_078858_2_1_6"/>
<dbReference type="OrthoDB" id="9802589at2"/>
<dbReference type="Proteomes" id="UP000007966">
    <property type="component" value="Chromosome"/>
</dbReference>
<dbReference type="GO" id="GO:0022625">
    <property type="term" value="C:cytosolic large ribosomal subunit"/>
    <property type="evidence" value="ECO:0007669"/>
    <property type="project" value="TreeGrafter"/>
</dbReference>
<dbReference type="GO" id="GO:0019843">
    <property type="term" value="F:rRNA binding"/>
    <property type="evidence" value="ECO:0007669"/>
    <property type="project" value="UniProtKB-UniRule"/>
</dbReference>
<dbReference type="GO" id="GO:0003735">
    <property type="term" value="F:structural constituent of ribosome"/>
    <property type="evidence" value="ECO:0007669"/>
    <property type="project" value="InterPro"/>
</dbReference>
<dbReference type="GO" id="GO:0000049">
    <property type="term" value="F:tRNA binding"/>
    <property type="evidence" value="ECO:0007669"/>
    <property type="project" value="UniProtKB-KW"/>
</dbReference>
<dbReference type="GO" id="GO:0006412">
    <property type="term" value="P:translation"/>
    <property type="evidence" value="ECO:0007669"/>
    <property type="project" value="UniProtKB-UniRule"/>
</dbReference>
<dbReference type="CDD" id="cd01433">
    <property type="entry name" value="Ribosomal_L16_L10e"/>
    <property type="match status" value="1"/>
</dbReference>
<dbReference type="FunFam" id="3.90.1170.10:FF:000001">
    <property type="entry name" value="50S ribosomal protein L16"/>
    <property type="match status" value="1"/>
</dbReference>
<dbReference type="Gene3D" id="3.90.1170.10">
    <property type="entry name" value="Ribosomal protein L10e/L16"/>
    <property type="match status" value="1"/>
</dbReference>
<dbReference type="HAMAP" id="MF_01342">
    <property type="entry name" value="Ribosomal_uL16"/>
    <property type="match status" value="1"/>
</dbReference>
<dbReference type="InterPro" id="IPR047873">
    <property type="entry name" value="Ribosomal_uL16"/>
</dbReference>
<dbReference type="InterPro" id="IPR000114">
    <property type="entry name" value="Ribosomal_uL16_bact-type"/>
</dbReference>
<dbReference type="InterPro" id="IPR020798">
    <property type="entry name" value="Ribosomal_uL16_CS"/>
</dbReference>
<dbReference type="InterPro" id="IPR016180">
    <property type="entry name" value="Ribosomal_uL16_dom"/>
</dbReference>
<dbReference type="InterPro" id="IPR036920">
    <property type="entry name" value="Ribosomal_uL16_sf"/>
</dbReference>
<dbReference type="NCBIfam" id="TIGR01164">
    <property type="entry name" value="rplP_bact"/>
    <property type="match status" value="1"/>
</dbReference>
<dbReference type="PANTHER" id="PTHR12220">
    <property type="entry name" value="50S/60S RIBOSOMAL PROTEIN L16"/>
    <property type="match status" value="1"/>
</dbReference>
<dbReference type="PANTHER" id="PTHR12220:SF13">
    <property type="entry name" value="LARGE RIBOSOMAL SUBUNIT PROTEIN UL16M"/>
    <property type="match status" value="1"/>
</dbReference>
<dbReference type="Pfam" id="PF00252">
    <property type="entry name" value="Ribosomal_L16"/>
    <property type="match status" value="1"/>
</dbReference>
<dbReference type="PRINTS" id="PR00060">
    <property type="entry name" value="RIBOSOMALL16"/>
</dbReference>
<dbReference type="SUPFAM" id="SSF54686">
    <property type="entry name" value="Ribosomal protein L16p/L10e"/>
    <property type="match status" value="1"/>
</dbReference>
<dbReference type="PROSITE" id="PS00586">
    <property type="entry name" value="RIBOSOMAL_L16_1"/>
    <property type="match status" value="1"/>
</dbReference>
<dbReference type="PROSITE" id="PS00701">
    <property type="entry name" value="RIBOSOMAL_L16_2"/>
    <property type="match status" value="1"/>
</dbReference>
<feature type="chain" id="PRO_0000062100" description="Large ribosomal subunit protein uL16">
    <location>
        <begin position="1"/>
        <end position="136"/>
    </location>
</feature>
<comment type="function">
    <text evidence="1">Binds 23S rRNA and is also seen to make contacts with the A and possibly P site tRNAs.</text>
</comment>
<comment type="subunit">
    <text evidence="1">Part of the 50S ribosomal subunit.</text>
</comment>
<comment type="similarity">
    <text evidence="1">Belongs to the universal ribosomal protein uL16 family.</text>
</comment>
<reference key="1">
    <citation type="journal article" date="2004" name="Proc. Natl. Acad. Sci. U.S.A.">
        <title>Genome sequence of the enterobacterial phytopathogen Erwinia carotovora subsp. atroseptica and characterization of virulence factors.</title>
        <authorList>
            <person name="Bell K.S."/>
            <person name="Sebaihia M."/>
            <person name="Pritchard L."/>
            <person name="Holden M.T.G."/>
            <person name="Hyman L.J."/>
            <person name="Holeva M.C."/>
            <person name="Thomson N.R."/>
            <person name="Bentley S.D."/>
            <person name="Churcher L.J.C."/>
            <person name="Mungall K."/>
            <person name="Atkin R."/>
            <person name="Bason N."/>
            <person name="Brooks K."/>
            <person name="Chillingworth T."/>
            <person name="Clark K."/>
            <person name="Doggett J."/>
            <person name="Fraser A."/>
            <person name="Hance Z."/>
            <person name="Hauser H."/>
            <person name="Jagels K."/>
            <person name="Moule S."/>
            <person name="Norbertczak H."/>
            <person name="Ormond D."/>
            <person name="Price C."/>
            <person name="Quail M.A."/>
            <person name="Sanders M."/>
            <person name="Walker D."/>
            <person name="Whitehead S."/>
            <person name="Salmond G.P.C."/>
            <person name="Birch P.R.J."/>
            <person name="Parkhill J."/>
            <person name="Toth I.K."/>
        </authorList>
    </citation>
    <scope>NUCLEOTIDE SEQUENCE [LARGE SCALE GENOMIC DNA]</scope>
    <source>
        <strain>SCRI 1043 / ATCC BAA-672</strain>
    </source>
</reference>
<gene>
    <name evidence="1" type="primary">rplP</name>
    <name type="ordered locus">ECA4024</name>
</gene>
<protein>
    <recommendedName>
        <fullName evidence="1">Large ribosomal subunit protein uL16</fullName>
    </recommendedName>
    <alternativeName>
        <fullName evidence="2">50S ribosomal protein L16</fullName>
    </alternativeName>
</protein>